<evidence type="ECO:0000255" key="1">
    <source>
        <dbReference type="HAMAP-Rule" id="MF_00315"/>
    </source>
</evidence>
<name>DXS_PARP8</name>
<sequence>MYDLLKTIDDPADLRRLDRRQLQPLADELRAFVLDSVSQTGGHLSSNLGTVELTIALHYVFDTPRDRIVWDVGHQTYPHKILTGRRDQMSTLRQLGGISGFPKRDESPYDTFGTAHSSTSISAALGMAIGSKLRGDDRFAIAVIGDGAMTAGMAFEAMNNAGVEDDVPLLVILNDNDMSISPPVGALNRHLARLMSGRFYAAARAGVERVLRHAPPVLDLARKLEEHAKGMIVPATLFEEFGFNYIGPIDGHDLDSLIPTLQNIKELRGPQFLHVVTKKGQGYKLAEADPVLYHGPGKFNPAEGIKPSTTPAKKTYTQVFGEWLCDAAELDSRVVGITPAMREGSGMVEFEKRFPDRYYDVGIAEQHAVTFAGGLATEGMKPVVAIYSTFLQRGYDQLIHDVALQNLPVVFAIDRAGLVGADGATHAGAYDLAFMRCIPNMTIMAASDENECRQMLYTALQQPNPTAVRYPRGAGTGVATVKQMAALPLGKGEVRRQSTQPAGKRIAILAFGTMVAPSLAAAEQLDATVANMRFVKPIDAALVRELAETHDAVVTVEEGCVMGGAGSACVEAMMESGVIRPVLQLGLPDRFIDHGDPAKLLASCGLDAAGIAKSIRERFVEHASGKSVKRVA</sequence>
<feature type="chain" id="PRO_1000115728" description="1-deoxy-D-xylulose-5-phosphate synthase">
    <location>
        <begin position="1"/>
        <end position="632"/>
    </location>
</feature>
<feature type="binding site" evidence="1">
    <location>
        <position position="74"/>
    </location>
    <ligand>
        <name>thiamine diphosphate</name>
        <dbReference type="ChEBI" id="CHEBI:58937"/>
    </ligand>
</feature>
<feature type="binding site" evidence="1">
    <location>
        <begin position="115"/>
        <end position="117"/>
    </location>
    <ligand>
        <name>thiamine diphosphate</name>
        <dbReference type="ChEBI" id="CHEBI:58937"/>
    </ligand>
</feature>
<feature type="binding site" evidence="1">
    <location>
        <position position="146"/>
    </location>
    <ligand>
        <name>Mg(2+)</name>
        <dbReference type="ChEBI" id="CHEBI:18420"/>
    </ligand>
</feature>
<feature type="binding site" evidence="1">
    <location>
        <begin position="147"/>
        <end position="148"/>
    </location>
    <ligand>
        <name>thiamine diphosphate</name>
        <dbReference type="ChEBI" id="CHEBI:58937"/>
    </ligand>
</feature>
<feature type="binding site" evidence="1">
    <location>
        <position position="176"/>
    </location>
    <ligand>
        <name>Mg(2+)</name>
        <dbReference type="ChEBI" id="CHEBI:18420"/>
    </ligand>
</feature>
<feature type="binding site" evidence="1">
    <location>
        <position position="176"/>
    </location>
    <ligand>
        <name>thiamine diphosphate</name>
        <dbReference type="ChEBI" id="CHEBI:58937"/>
    </ligand>
</feature>
<feature type="binding site" evidence="1">
    <location>
        <position position="283"/>
    </location>
    <ligand>
        <name>thiamine diphosphate</name>
        <dbReference type="ChEBI" id="CHEBI:58937"/>
    </ligand>
</feature>
<feature type="binding site" evidence="1">
    <location>
        <position position="365"/>
    </location>
    <ligand>
        <name>thiamine diphosphate</name>
        <dbReference type="ChEBI" id="CHEBI:58937"/>
    </ligand>
</feature>
<dbReference type="EC" id="2.2.1.7" evidence="1"/>
<dbReference type="EMBL" id="CP001044">
    <property type="protein sequence ID" value="ACC73071.1"/>
    <property type="molecule type" value="Genomic_DNA"/>
</dbReference>
<dbReference type="RefSeq" id="WP_012403244.1">
    <property type="nucleotide sequence ID" value="NC_010623.1"/>
</dbReference>
<dbReference type="SMR" id="B2JP68"/>
<dbReference type="STRING" id="391038.Bphy_3948"/>
<dbReference type="KEGG" id="bph:Bphy_3948"/>
<dbReference type="eggNOG" id="COG1154">
    <property type="taxonomic scope" value="Bacteria"/>
</dbReference>
<dbReference type="HOGENOM" id="CLU_009227_1_4_4"/>
<dbReference type="OrthoDB" id="9803371at2"/>
<dbReference type="UniPathway" id="UPA00064">
    <property type="reaction ID" value="UER00091"/>
</dbReference>
<dbReference type="Proteomes" id="UP000001192">
    <property type="component" value="Chromosome 2"/>
</dbReference>
<dbReference type="GO" id="GO:0005829">
    <property type="term" value="C:cytosol"/>
    <property type="evidence" value="ECO:0007669"/>
    <property type="project" value="TreeGrafter"/>
</dbReference>
<dbReference type="GO" id="GO:0008661">
    <property type="term" value="F:1-deoxy-D-xylulose-5-phosphate synthase activity"/>
    <property type="evidence" value="ECO:0007669"/>
    <property type="project" value="UniProtKB-UniRule"/>
</dbReference>
<dbReference type="GO" id="GO:0000287">
    <property type="term" value="F:magnesium ion binding"/>
    <property type="evidence" value="ECO:0007669"/>
    <property type="project" value="UniProtKB-UniRule"/>
</dbReference>
<dbReference type="GO" id="GO:0030976">
    <property type="term" value="F:thiamine pyrophosphate binding"/>
    <property type="evidence" value="ECO:0007669"/>
    <property type="project" value="UniProtKB-UniRule"/>
</dbReference>
<dbReference type="GO" id="GO:0052865">
    <property type="term" value="P:1-deoxy-D-xylulose 5-phosphate biosynthetic process"/>
    <property type="evidence" value="ECO:0007669"/>
    <property type="project" value="UniProtKB-UniPathway"/>
</dbReference>
<dbReference type="GO" id="GO:0019288">
    <property type="term" value="P:isopentenyl diphosphate biosynthetic process, methylerythritol 4-phosphate pathway"/>
    <property type="evidence" value="ECO:0007669"/>
    <property type="project" value="TreeGrafter"/>
</dbReference>
<dbReference type="GO" id="GO:0016114">
    <property type="term" value="P:terpenoid biosynthetic process"/>
    <property type="evidence" value="ECO:0007669"/>
    <property type="project" value="UniProtKB-UniRule"/>
</dbReference>
<dbReference type="GO" id="GO:0009228">
    <property type="term" value="P:thiamine biosynthetic process"/>
    <property type="evidence" value="ECO:0007669"/>
    <property type="project" value="UniProtKB-UniRule"/>
</dbReference>
<dbReference type="CDD" id="cd02007">
    <property type="entry name" value="TPP_DXS"/>
    <property type="match status" value="1"/>
</dbReference>
<dbReference type="CDD" id="cd07033">
    <property type="entry name" value="TPP_PYR_DXS_TK_like"/>
    <property type="match status" value="1"/>
</dbReference>
<dbReference type="FunFam" id="3.40.50.920:FF:000002">
    <property type="entry name" value="1-deoxy-D-xylulose-5-phosphate synthase"/>
    <property type="match status" value="1"/>
</dbReference>
<dbReference type="FunFam" id="3.40.50.970:FF:000005">
    <property type="entry name" value="1-deoxy-D-xylulose-5-phosphate synthase"/>
    <property type="match status" value="1"/>
</dbReference>
<dbReference type="Gene3D" id="3.40.50.920">
    <property type="match status" value="1"/>
</dbReference>
<dbReference type="Gene3D" id="3.40.50.970">
    <property type="match status" value="2"/>
</dbReference>
<dbReference type="HAMAP" id="MF_00315">
    <property type="entry name" value="DXP_synth"/>
    <property type="match status" value="1"/>
</dbReference>
<dbReference type="InterPro" id="IPR005477">
    <property type="entry name" value="Dxylulose-5-P_synthase"/>
</dbReference>
<dbReference type="InterPro" id="IPR029061">
    <property type="entry name" value="THDP-binding"/>
</dbReference>
<dbReference type="InterPro" id="IPR009014">
    <property type="entry name" value="Transketo_C/PFOR_II"/>
</dbReference>
<dbReference type="InterPro" id="IPR005475">
    <property type="entry name" value="Transketolase-like_Pyr-bd"/>
</dbReference>
<dbReference type="InterPro" id="IPR020826">
    <property type="entry name" value="Transketolase_BS"/>
</dbReference>
<dbReference type="InterPro" id="IPR033248">
    <property type="entry name" value="Transketolase_C"/>
</dbReference>
<dbReference type="InterPro" id="IPR049557">
    <property type="entry name" value="Transketolase_CS"/>
</dbReference>
<dbReference type="NCBIfam" id="TIGR00204">
    <property type="entry name" value="dxs"/>
    <property type="match status" value="1"/>
</dbReference>
<dbReference type="NCBIfam" id="NF003933">
    <property type="entry name" value="PRK05444.2-2"/>
    <property type="match status" value="1"/>
</dbReference>
<dbReference type="PANTHER" id="PTHR43322">
    <property type="entry name" value="1-D-DEOXYXYLULOSE 5-PHOSPHATE SYNTHASE-RELATED"/>
    <property type="match status" value="1"/>
</dbReference>
<dbReference type="PANTHER" id="PTHR43322:SF5">
    <property type="entry name" value="1-DEOXY-D-XYLULOSE-5-PHOSPHATE SYNTHASE, CHLOROPLASTIC"/>
    <property type="match status" value="1"/>
</dbReference>
<dbReference type="Pfam" id="PF13292">
    <property type="entry name" value="DXP_synthase_N"/>
    <property type="match status" value="1"/>
</dbReference>
<dbReference type="Pfam" id="PF02779">
    <property type="entry name" value="Transket_pyr"/>
    <property type="match status" value="1"/>
</dbReference>
<dbReference type="Pfam" id="PF02780">
    <property type="entry name" value="Transketolase_C"/>
    <property type="match status" value="1"/>
</dbReference>
<dbReference type="SMART" id="SM00861">
    <property type="entry name" value="Transket_pyr"/>
    <property type="match status" value="1"/>
</dbReference>
<dbReference type="SUPFAM" id="SSF52518">
    <property type="entry name" value="Thiamin diphosphate-binding fold (THDP-binding)"/>
    <property type="match status" value="2"/>
</dbReference>
<dbReference type="SUPFAM" id="SSF52922">
    <property type="entry name" value="TK C-terminal domain-like"/>
    <property type="match status" value="1"/>
</dbReference>
<dbReference type="PROSITE" id="PS00801">
    <property type="entry name" value="TRANSKETOLASE_1"/>
    <property type="match status" value="1"/>
</dbReference>
<dbReference type="PROSITE" id="PS00802">
    <property type="entry name" value="TRANSKETOLASE_2"/>
    <property type="match status" value="1"/>
</dbReference>
<proteinExistence type="inferred from homology"/>
<keyword id="KW-0414">Isoprene biosynthesis</keyword>
<keyword id="KW-0460">Magnesium</keyword>
<keyword id="KW-0479">Metal-binding</keyword>
<keyword id="KW-1185">Reference proteome</keyword>
<keyword id="KW-0784">Thiamine biosynthesis</keyword>
<keyword id="KW-0786">Thiamine pyrophosphate</keyword>
<keyword id="KW-0808">Transferase</keyword>
<protein>
    <recommendedName>
        <fullName evidence="1">1-deoxy-D-xylulose-5-phosphate synthase</fullName>
        <ecNumber evidence="1">2.2.1.7</ecNumber>
    </recommendedName>
    <alternativeName>
        <fullName evidence="1">1-deoxyxylulose-5-phosphate synthase</fullName>
        <shortName evidence="1">DXP synthase</shortName>
        <shortName evidence="1">DXPS</shortName>
    </alternativeName>
</protein>
<gene>
    <name evidence="1" type="primary">dxs</name>
    <name type="ordered locus">Bphy_3948</name>
</gene>
<comment type="function">
    <text evidence="1">Catalyzes the acyloin condensation reaction between C atoms 2 and 3 of pyruvate and glyceraldehyde 3-phosphate to yield 1-deoxy-D-xylulose-5-phosphate (DXP).</text>
</comment>
<comment type="catalytic activity">
    <reaction evidence="1">
        <text>D-glyceraldehyde 3-phosphate + pyruvate + H(+) = 1-deoxy-D-xylulose 5-phosphate + CO2</text>
        <dbReference type="Rhea" id="RHEA:12605"/>
        <dbReference type="ChEBI" id="CHEBI:15361"/>
        <dbReference type="ChEBI" id="CHEBI:15378"/>
        <dbReference type="ChEBI" id="CHEBI:16526"/>
        <dbReference type="ChEBI" id="CHEBI:57792"/>
        <dbReference type="ChEBI" id="CHEBI:59776"/>
        <dbReference type="EC" id="2.2.1.7"/>
    </reaction>
</comment>
<comment type="cofactor">
    <cofactor evidence="1">
        <name>Mg(2+)</name>
        <dbReference type="ChEBI" id="CHEBI:18420"/>
    </cofactor>
    <text evidence="1">Binds 1 Mg(2+) ion per subunit.</text>
</comment>
<comment type="cofactor">
    <cofactor evidence="1">
        <name>thiamine diphosphate</name>
        <dbReference type="ChEBI" id="CHEBI:58937"/>
    </cofactor>
    <text evidence="1">Binds 1 thiamine pyrophosphate per subunit.</text>
</comment>
<comment type="pathway">
    <text evidence="1">Metabolic intermediate biosynthesis; 1-deoxy-D-xylulose 5-phosphate biosynthesis; 1-deoxy-D-xylulose 5-phosphate from D-glyceraldehyde 3-phosphate and pyruvate: step 1/1.</text>
</comment>
<comment type="subunit">
    <text evidence="1">Homodimer.</text>
</comment>
<comment type="similarity">
    <text evidence="1">Belongs to the transketolase family. DXPS subfamily.</text>
</comment>
<organism>
    <name type="scientific">Paraburkholderia phymatum (strain DSM 17167 / CIP 108236 / LMG 21445 / STM815)</name>
    <name type="common">Burkholderia phymatum</name>
    <dbReference type="NCBI Taxonomy" id="391038"/>
    <lineage>
        <taxon>Bacteria</taxon>
        <taxon>Pseudomonadati</taxon>
        <taxon>Pseudomonadota</taxon>
        <taxon>Betaproteobacteria</taxon>
        <taxon>Burkholderiales</taxon>
        <taxon>Burkholderiaceae</taxon>
        <taxon>Paraburkholderia</taxon>
    </lineage>
</organism>
<accession>B2JP68</accession>
<reference key="1">
    <citation type="journal article" date="2014" name="Stand. Genomic Sci.">
        <title>Complete genome sequence of Burkholderia phymatum STM815(T), a broad host range and efficient nitrogen-fixing symbiont of Mimosa species.</title>
        <authorList>
            <person name="Moulin L."/>
            <person name="Klonowska A."/>
            <person name="Caroline B."/>
            <person name="Booth K."/>
            <person name="Vriezen J.A."/>
            <person name="Melkonian R."/>
            <person name="James E.K."/>
            <person name="Young J.P."/>
            <person name="Bena G."/>
            <person name="Hauser L."/>
            <person name="Land M."/>
            <person name="Kyrpides N."/>
            <person name="Bruce D."/>
            <person name="Chain P."/>
            <person name="Copeland A."/>
            <person name="Pitluck S."/>
            <person name="Woyke T."/>
            <person name="Lizotte-Waniewski M."/>
            <person name="Bristow J."/>
            <person name="Riley M."/>
        </authorList>
    </citation>
    <scope>NUCLEOTIDE SEQUENCE [LARGE SCALE GENOMIC DNA]</scope>
    <source>
        <strain>DSM 17167 / CIP 108236 / LMG 21445 / STM815</strain>
    </source>
</reference>